<comment type="function">
    <text evidence="1">Catalyzes the condensation of ATP and 5-phosphoribose 1-diphosphate to form N'-(5'-phosphoribosyl)-ATP (PR-ATP). Has a crucial role in the pathway because the rate of histidine biosynthesis seems to be controlled primarily by regulation of HisG enzymatic activity.</text>
</comment>
<comment type="catalytic activity">
    <reaction evidence="1">
        <text>1-(5-phospho-beta-D-ribosyl)-ATP + diphosphate = 5-phospho-alpha-D-ribose 1-diphosphate + ATP</text>
        <dbReference type="Rhea" id="RHEA:18473"/>
        <dbReference type="ChEBI" id="CHEBI:30616"/>
        <dbReference type="ChEBI" id="CHEBI:33019"/>
        <dbReference type="ChEBI" id="CHEBI:58017"/>
        <dbReference type="ChEBI" id="CHEBI:73183"/>
        <dbReference type="EC" id="2.4.2.17"/>
    </reaction>
</comment>
<comment type="cofactor">
    <cofactor evidence="1">
        <name>Mg(2+)</name>
        <dbReference type="ChEBI" id="CHEBI:18420"/>
    </cofactor>
</comment>
<comment type="activity regulation">
    <text evidence="1">Feedback inhibited by histidine.</text>
</comment>
<comment type="pathway">
    <text evidence="1">Amino-acid biosynthesis; L-histidine biosynthesis; L-histidine from 5-phospho-alpha-D-ribose 1-diphosphate: step 1/9.</text>
</comment>
<comment type="subcellular location">
    <subcellularLocation>
        <location evidence="1">Cytoplasm</location>
    </subcellularLocation>
</comment>
<comment type="similarity">
    <text evidence="1">Belongs to the ATP phosphoribosyltransferase family. Long subfamily.</text>
</comment>
<name>HIS1_SHEWM</name>
<dbReference type="EC" id="2.4.2.17" evidence="1"/>
<dbReference type="EMBL" id="CP000961">
    <property type="protein sequence ID" value="ACA86376.1"/>
    <property type="molecule type" value="Genomic_DNA"/>
</dbReference>
<dbReference type="RefSeq" id="WP_012324721.1">
    <property type="nucleotide sequence ID" value="NC_010506.1"/>
</dbReference>
<dbReference type="SMR" id="B1KRG9"/>
<dbReference type="STRING" id="392500.Swoo_2092"/>
<dbReference type="KEGG" id="swd:Swoo_2092"/>
<dbReference type="eggNOG" id="COG0040">
    <property type="taxonomic scope" value="Bacteria"/>
</dbReference>
<dbReference type="HOGENOM" id="CLU_038115_1_0_6"/>
<dbReference type="UniPathway" id="UPA00031">
    <property type="reaction ID" value="UER00006"/>
</dbReference>
<dbReference type="Proteomes" id="UP000002168">
    <property type="component" value="Chromosome"/>
</dbReference>
<dbReference type="GO" id="GO:0005737">
    <property type="term" value="C:cytoplasm"/>
    <property type="evidence" value="ECO:0007669"/>
    <property type="project" value="UniProtKB-SubCell"/>
</dbReference>
<dbReference type="GO" id="GO:0005524">
    <property type="term" value="F:ATP binding"/>
    <property type="evidence" value="ECO:0007669"/>
    <property type="project" value="UniProtKB-KW"/>
</dbReference>
<dbReference type="GO" id="GO:0003879">
    <property type="term" value="F:ATP phosphoribosyltransferase activity"/>
    <property type="evidence" value="ECO:0007669"/>
    <property type="project" value="UniProtKB-UniRule"/>
</dbReference>
<dbReference type="GO" id="GO:0000287">
    <property type="term" value="F:magnesium ion binding"/>
    <property type="evidence" value="ECO:0007669"/>
    <property type="project" value="UniProtKB-UniRule"/>
</dbReference>
<dbReference type="GO" id="GO:0000105">
    <property type="term" value="P:L-histidine biosynthetic process"/>
    <property type="evidence" value="ECO:0007669"/>
    <property type="project" value="UniProtKB-UniRule"/>
</dbReference>
<dbReference type="CDD" id="cd13592">
    <property type="entry name" value="PBP2_HisGL2"/>
    <property type="match status" value="1"/>
</dbReference>
<dbReference type="FunFam" id="3.30.70.120:FF:000002">
    <property type="entry name" value="ATP phosphoribosyltransferase"/>
    <property type="match status" value="1"/>
</dbReference>
<dbReference type="FunFam" id="3.40.190.10:FF:000008">
    <property type="entry name" value="ATP phosphoribosyltransferase"/>
    <property type="match status" value="1"/>
</dbReference>
<dbReference type="Gene3D" id="3.30.70.120">
    <property type="match status" value="1"/>
</dbReference>
<dbReference type="Gene3D" id="3.40.190.10">
    <property type="entry name" value="Periplasmic binding protein-like II"/>
    <property type="match status" value="2"/>
</dbReference>
<dbReference type="HAMAP" id="MF_00079">
    <property type="entry name" value="HisG_Long"/>
    <property type="match status" value="1"/>
</dbReference>
<dbReference type="InterPro" id="IPR020621">
    <property type="entry name" value="ATP-PRT_HisG_long"/>
</dbReference>
<dbReference type="InterPro" id="IPR013820">
    <property type="entry name" value="ATP_PRibTrfase_cat"/>
</dbReference>
<dbReference type="InterPro" id="IPR018198">
    <property type="entry name" value="ATP_PRibTrfase_CS"/>
</dbReference>
<dbReference type="InterPro" id="IPR001348">
    <property type="entry name" value="ATP_PRibTrfase_HisG"/>
</dbReference>
<dbReference type="InterPro" id="IPR013115">
    <property type="entry name" value="HisG_C"/>
</dbReference>
<dbReference type="InterPro" id="IPR011322">
    <property type="entry name" value="N-reg_PII-like_a/b"/>
</dbReference>
<dbReference type="InterPro" id="IPR015867">
    <property type="entry name" value="N-reg_PII/ATP_PRibTrfase_C"/>
</dbReference>
<dbReference type="NCBIfam" id="TIGR00070">
    <property type="entry name" value="hisG"/>
    <property type="match status" value="1"/>
</dbReference>
<dbReference type="NCBIfam" id="TIGR03455">
    <property type="entry name" value="HisG_C-term"/>
    <property type="match status" value="1"/>
</dbReference>
<dbReference type="PANTHER" id="PTHR21403:SF8">
    <property type="entry name" value="ATP PHOSPHORIBOSYLTRANSFERASE"/>
    <property type="match status" value="1"/>
</dbReference>
<dbReference type="PANTHER" id="PTHR21403">
    <property type="entry name" value="ATP PHOSPHORIBOSYLTRANSFERASE ATP-PRTASE"/>
    <property type="match status" value="1"/>
</dbReference>
<dbReference type="Pfam" id="PF01634">
    <property type="entry name" value="HisG"/>
    <property type="match status" value="1"/>
</dbReference>
<dbReference type="Pfam" id="PF08029">
    <property type="entry name" value="HisG_C"/>
    <property type="match status" value="1"/>
</dbReference>
<dbReference type="SUPFAM" id="SSF54913">
    <property type="entry name" value="GlnB-like"/>
    <property type="match status" value="1"/>
</dbReference>
<dbReference type="SUPFAM" id="SSF53850">
    <property type="entry name" value="Periplasmic binding protein-like II"/>
    <property type="match status" value="1"/>
</dbReference>
<dbReference type="PROSITE" id="PS01316">
    <property type="entry name" value="ATP_P_PHORIBOSYLTR"/>
    <property type="match status" value="1"/>
</dbReference>
<organism>
    <name type="scientific">Shewanella woodyi (strain ATCC 51908 / MS32)</name>
    <dbReference type="NCBI Taxonomy" id="392500"/>
    <lineage>
        <taxon>Bacteria</taxon>
        <taxon>Pseudomonadati</taxon>
        <taxon>Pseudomonadota</taxon>
        <taxon>Gammaproteobacteria</taxon>
        <taxon>Alteromonadales</taxon>
        <taxon>Shewanellaceae</taxon>
        <taxon>Shewanella</taxon>
    </lineage>
</organism>
<reference key="1">
    <citation type="submission" date="2008-02" db="EMBL/GenBank/DDBJ databases">
        <title>Complete sequence of Shewanella woodyi ATCC 51908.</title>
        <authorList>
            <consortium name="US DOE Joint Genome Institute"/>
            <person name="Copeland A."/>
            <person name="Lucas S."/>
            <person name="Lapidus A."/>
            <person name="Glavina del Rio T."/>
            <person name="Dalin E."/>
            <person name="Tice H."/>
            <person name="Bruce D."/>
            <person name="Goodwin L."/>
            <person name="Pitluck S."/>
            <person name="Sims D."/>
            <person name="Brettin T."/>
            <person name="Detter J.C."/>
            <person name="Han C."/>
            <person name="Kuske C.R."/>
            <person name="Schmutz J."/>
            <person name="Larimer F."/>
            <person name="Land M."/>
            <person name="Hauser L."/>
            <person name="Kyrpides N."/>
            <person name="Lykidis A."/>
            <person name="Zhao J.-S."/>
            <person name="Richardson P."/>
        </authorList>
    </citation>
    <scope>NUCLEOTIDE SEQUENCE [LARGE SCALE GENOMIC DNA]</scope>
    <source>
        <strain>ATCC 51908 / MS32</strain>
    </source>
</reference>
<feature type="chain" id="PRO_1000092752" description="ATP phosphoribosyltransferase">
    <location>
        <begin position="1"/>
        <end position="299"/>
    </location>
</feature>
<gene>
    <name evidence="1" type="primary">hisG</name>
    <name type="ordered locus">Swoo_2092</name>
</gene>
<accession>B1KRG9</accession>
<evidence type="ECO:0000255" key="1">
    <source>
        <dbReference type="HAMAP-Rule" id="MF_00079"/>
    </source>
</evidence>
<keyword id="KW-0028">Amino-acid biosynthesis</keyword>
<keyword id="KW-0067">ATP-binding</keyword>
<keyword id="KW-0963">Cytoplasm</keyword>
<keyword id="KW-0328">Glycosyltransferase</keyword>
<keyword id="KW-0368">Histidine biosynthesis</keyword>
<keyword id="KW-0460">Magnesium</keyword>
<keyword id="KW-0479">Metal-binding</keyword>
<keyword id="KW-0547">Nucleotide-binding</keyword>
<keyword id="KW-1185">Reference proteome</keyword>
<keyword id="KW-0808">Transferase</keyword>
<sequence length="299" mass="33141">MSESNRLRIAIQKSGRLSKESMKLLRSCGVKFNINEQRLIAHSDNLPIDLLRVRDDDIPGLVMDGVVDLGIIGENVLEEEQIERERLDKPASCIKLRELDFGACRLSLAVPNEFNYEDASSLEGLRIATSYPNLLRRYMQRKGITYNDCMLKGSVEVAPRAGLADGICDLVSTGATLEANGLYETEVIYRSNACIIQSSEVQLPAKQALIEKILSRINGVVRAKESKYILLHAPTETLEQIVALLPGAENPTVLPLNDDTNRVAIHAVSTEDLFWDTMEELTKLGASSILVMPIEKMMG</sequence>
<proteinExistence type="inferred from homology"/>
<protein>
    <recommendedName>
        <fullName evidence="1">ATP phosphoribosyltransferase</fullName>
        <shortName evidence="1">ATP-PRT</shortName>
        <shortName evidence="1">ATP-PRTase</shortName>
        <ecNumber evidence="1">2.4.2.17</ecNumber>
    </recommendedName>
</protein>